<protein>
    <recommendedName>
        <fullName evidence="1">Biosynthetic peptidoglycan transglycosylase</fullName>
        <ecNumber evidence="1">2.4.99.28</ecNumber>
    </recommendedName>
    <alternativeName>
        <fullName evidence="1">Glycan polymerase</fullName>
    </alternativeName>
    <alternativeName>
        <fullName evidence="1">Peptidoglycan glycosyltransferase MtgA</fullName>
        <shortName evidence="1">PGT</shortName>
    </alternativeName>
</protein>
<feature type="chain" id="PRO_0000083148" description="Biosynthetic peptidoglycan transglycosylase">
    <location>
        <begin position="1"/>
        <end position="246"/>
    </location>
</feature>
<feature type="transmembrane region" description="Helical" evidence="1">
    <location>
        <begin position="20"/>
        <end position="42"/>
    </location>
</feature>
<dbReference type="EC" id="2.4.99.28" evidence="1"/>
<dbReference type="EMBL" id="AE008922">
    <property type="protein sequence ID" value="AAM42136.1"/>
    <property type="molecule type" value="Genomic_DNA"/>
</dbReference>
<dbReference type="RefSeq" id="NP_638212.1">
    <property type="nucleotide sequence ID" value="NC_003902.1"/>
</dbReference>
<dbReference type="RefSeq" id="WP_011037989.1">
    <property type="nucleotide sequence ID" value="NC_003902.1"/>
</dbReference>
<dbReference type="SMR" id="Q8P6V1"/>
<dbReference type="STRING" id="190485.XCC2864"/>
<dbReference type="CAZy" id="GT51">
    <property type="family name" value="Glycosyltransferase Family 51"/>
</dbReference>
<dbReference type="EnsemblBacteria" id="AAM42136">
    <property type="protein sequence ID" value="AAM42136"/>
    <property type="gene ID" value="XCC2864"/>
</dbReference>
<dbReference type="KEGG" id="xcc:XCC2864"/>
<dbReference type="PATRIC" id="fig|190485.4.peg.3066"/>
<dbReference type="eggNOG" id="COG0744">
    <property type="taxonomic scope" value="Bacteria"/>
</dbReference>
<dbReference type="HOGENOM" id="CLU_006354_1_1_6"/>
<dbReference type="OrthoDB" id="9766909at2"/>
<dbReference type="UniPathway" id="UPA00219"/>
<dbReference type="Proteomes" id="UP000001010">
    <property type="component" value="Chromosome"/>
</dbReference>
<dbReference type="GO" id="GO:0009274">
    <property type="term" value="C:peptidoglycan-based cell wall"/>
    <property type="evidence" value="ECO:0007669"/>
    <property type="project" value="InterPro"/>
</dbReference>
<dbReference type="GO" id="GO:0005886">
    <property type="term" value="C:plasma membrane"/>
    <property type="evidence" value="ECO:0000318"/>
    <property type="project" value="GO_Central"/>
</dbReference>
<dbReference type="GO" id="GO:0016763">
    <property type="term" value="F:pentosyltransferase activity"/>
    <property type="evidence" value="ECO:0007669"/>
    <property type="project" value="InterPro"/>
</dbReference>
<dbReference type="GO" id="GO:0008955">
    <property type="term" value="F:peptidoglycan glycosyltransferase activity"/>
    <property type="evidence" value="ECO:0000318"/>
    <property type="project" value="GO_Central"/>
</dbReference>
<dbReference type="GO" id="GO:0071555">
    <property type="term" value="P:cell wall organization"/>
    <property type="evidence" value="ECO:0007669"/>
    <property type="project" value="UniProtKB-KW"/>
</dbReference>
<dbReference type="GO" id="GO:0009252">
    <property type="term" value="P:peptidoglycan biosynthetic process"/>
    <property type="evidence" value="ECO:0000318"/>
    <property type="project" value="GO_Central"/>
</dbReference>
<dbReference type="GO" id="GO:0008360">
    <property type="term" value="P:regulation of cell shape"/>
    <property type="evidence" value="ECO:0007669"/>
    <property type="project" value="UniProtKB-KW"/>
</dbReference>
<dbReference type="Gene3D" id="1.10.3810.10">
    <property type="entry name" value="Biosynthetic peptidoglycan transglycosylase-like"/>
    <property type="match status" value="1"/>
</dbReference>
<dbReference type="HAMAP" id="MF_00766">
    <property type="entry name" value="PGT_MtgA"/>
    <property type="match status" value="1"/>
</dbReference>
<dbReference type="InterPro" id="IPR001264">
    <property type="entry name" value="Glyco_trans_51"/>
</dbReference>
<dbReference type="InterPro" id="IPR023346">
    <property type="entry name" value="Lysozyme-like_dom_sf"/>
</dbReference>
<dbReference type="InterPro" id="IPR036950">
    <property type="entry name" value="PBP_transglycosylase"/>
</dbReference>
<dbReference type="InterPro" id="IPR011812">
    <property type="entry name" value="Pep_trsgly"/>
</dbReference>
<dbReference type="NCBIfam" id="TIGR02070">
    <property type="entry name" value="mono_pep_trsgly"/>
    <property type="match status" value="1"/>
</dbReference>
<dbReference type="PANTHER" id="PTHR30400:SF0">
    <property type="entry name" value="BIOSYNTHETIC PEPTIDOGLYCAN TRANSGLYCOSYLASE"/>
    <property type="match status" value="1"/>
</dbReference>
<dbReference type="PANTHER" id="PTHR30400">
    <property type="entry name" value="MONOFUNCTIONAL BIOSYNTHETIC PEPTIDOGLYCAN TRANSGLYCOSYLASE"/>
    <property type="match status" value="1"/>
</dbReference>
<dbReference type="Pfam" id="PF00912">
    <property type="entry name" value="Transgly"/>
    <property type="match status" value="1"/>
</dbReference>
<dbReference type="SUPFAM" id="SSF53955">
    <property type="entry name" value="Lysozyme-like"/>
    <property type="match status" value="1"/>
</dbReference>
<gene>
    <name evidence="1" type="primary">mtgA</name>
    <name type="ordered locus">XCC2864</name>
</gene>
<comment type="function">
    <text evidence="1">Peptidoglycan polymerase that catalyzes glycan chain elongation from lipid-linked precursors.</text>
</comment>
<comment type="catalytic activity">
    <reaction evidence="1">
        <text>[GlcNAc-(1-&gt;4)-Mur2Ac(oyl-L-Ala-gamma-D-Glu-L-Lys-D-Ala-D-Ala)](n)-di-trans,octa-cis-undecaprenyl diphosphate + beta-D-GlcNAc-(1-&gt;4)-Mur2Ac(oyl-L-Ala-gamma-D-Glu-L-Lys-D-Ala-D-Ala)-di-trans,octa-cis-undecaprenyl diphosphate = [GlcNAc-(1-&gt;4)-Mur2Ac(oyl-L-Ala-gamma-D-Glu-L-Lys-D-Ala-D-Ala)](n+1)-di-trans,octa-cis-undecaprenyl diphosphate + di-trans,octa-cis-undecaprenyl diphosphate + H(+)</text>
        <dbReference type="Rhea" id="RHEA:23708"/>
        <dbReference type="Rhea" id="RHEA-COMP:9602"/>
        <dbReference type="Rhea" id="RHEA-COMP:9603"/>
        <dbReference type="ChEBI" id="CHEBI:15378"/>
        <dbReference type="ChEBI" id="CHEBI:58405"/>
        <dbReference type="ChEBI" id="CHEBI:60033"/>
        <dbReference type="ChEBI" id="CHEBI:78435"/>
        <dbReference type="EC" id="2.4.99.28"/>
    </reaction>
</comment>
<comment type="pathway">
    <text evidence="1">Cell wall biogenesis; peptidoglycan biosynthesis.</text>
</comment>
<comment type="subcellular location">
    <subcellularLocation>
        <location evidence="1">Cell inner membrane</location>
        <topology evidence="1">Single-pass membrane protein</topology>
    </subcellularLocation>
</comment>
<comment type="similarity">
    <text evidence="1">Belongs to the glycosyltransferase 51 family.</text>
</comment>
<reference key="1">
    <citation type="journal article" date="2002" name="Nature">
        <title>Comparison of the genomes of two Xanthomonas pathogens with differing host specificities.</title>
        <authorList>
            <person name="da Silva A.C.R."/>
            <person name="Ferro J.A."/>
            <person name="Reinach F.C."/>
            <person name="Farah C.S."/>
            <person name="Furlan L.R."/>
            <person name="Quaggio R.B."/>
            <person name="Monteiro-Vitorello C.B."/>
            <person name="Van Sluys M.A."/>
            <person name="Almeida N.F. Jr."/>
            <person name="Alves L.M.C."/>
            <person name="do Amaral A.M."/>
            <person name="Bertolini M.C."/>
            <person name="Camargo L.E.A."/>
            <person name="Camarotte G."/>
            <person name="Cannavan F."/>
            <person name="Cardozo J."/>
            <person name="Chambergo F."/>
            <person name="Ciapina L.P."/>
            <person name="Cicarelli R.M.B."/>
            <person name="Coutinho L.L."/>
            <person name="Cursino-Santos J.R."/>
            <person name="El-Dorry H."/>
            <person name="Faria J.B."/>
            <person name="Ferreira A.J.S."/>
            <person name="Ferreira R.C.C."/>
            <person name="Ferro M.I.T."/>
            <person name="Formighieri E.F."/>
            <person name="Franco M.C."/>
            <person name="Greggio C.C."/>
            <person name="Gruber A."/>
            <person name="Katsuyama A.M."/>
            <person name="Kishi L.T."/>
            <person name="Leite R.P."/>
            <person name="Lemos E.G.M."/>
            <person name="Lemos M.V.F."/>
            <person name="Locali E.C."/>
            <person name="Machado M.A."/>
            <person name="Madeira A.M.B.N."/>
            <person name="Martinez-Rossi N.M."/>
            <person name="Martins E.C."/>
            <person name="Meidanis J."/>
            <person name="Menck C.F.M."/>
            <person name="Miyaki C.Y."/>
            <person name="Moon D.H."/>
            <person name="Moreira L.M."/>
            <person name="Novo M.T.M."/>
            <person name="Okura V.K."/>
            <person name="Oliveira M.C."/>
            <person name="Oliveira V.R."/>
            <person name="Pereira H.A."/>
            <person name="Rossi A."/>
            <person name="Sena J.A.D."/>
            <person name="Silva C."/>
            <person name="de Souza R.F."/>
            <person name="Spinola L.A.F."/>
            <person name="Takita M.A."/>
            <person name="Tamura R.E."/>
            <person name="Teixeira E.C."/>
            <person name="Tezza R.I.D."/>
            <person name="Trindade dos Santos M."/>
            <person name="Truffi D."/>
            <person name="Tsai S.M."/>
            <person name="White F.F."/>
            <person name="Setubal J.C."/>
            <person name="Kitajima J.P."/>
        </authorList>
    </citation>
    <scope>NUCLEOTIDE SEQUENCE [LARGE SCALE GENOMIC DNA]</scope>
    <source>
        <strain>ATCC 33913 / DSM 3586 / NCPPB 528 / LMG 568 / P 25</strain>
    </source>
</reference>
<keyword id="KW-0997">Cell inner membrane</keyword>
<keyword id="KW-1003">Cell membrane</keyword>
<keyword id="KW-0133">Cell shape</keyword>
<keyword id="KW-0961">Cell wall biogenesis/degradation</keyword>
<keyword id="KW-0328">Glycosyltransferase</keyword>
<keyword id="KW-0472">Membrane</keyword>
<keyword id="KW-0573">Peptidoglycan synthesis</keyword>
<keyword id="KW-1185">Reference proteome</keyword>
<keyword id="KW-0808">Transferase</keyword>
<keyword id="KW-0812">Transmembrane</keyword>
<keyword id="KW-1133">Transmembrane helix</keyword>
<proteinExistence type="inferred from homology"/>
<name>MTGA_XANCP</name>
<sequence length="246" mass="27658">MGTDGLDDKQARPPRRARRSLRWVLAAPLLFAAASVLQVLALRIIDPPISTVMVGRYLEAWGEGEAGFSLHHQWRDLDEIAPSLPISVVAAEDQQFPSHHGFDLQAIEKARDYNARGGRVRGASTISQQVAKNVFLWQGRSWVRKGLEAWYTLLIELFWPKQRILEMYVNVAEFGDGIYGAQAAARQFWGKDASRLTPTESARLAAVLPSPRRYDARRPGAYVQRRTAWIQRQARQLGGPGYLQAP</sequence>
<evidence type="ECO:0000255" key="1">
    <source>
        <dbReference type="HAMAP-Rule" id="MF_00766"/>
    </source>
</evidence>
<accession>Q8P6V1</accession>
<organism>
    <name type="scientific">Xanthomonas campestris pv. campestris (strain ATCC 33913 / DSM 3586 / NCPPB 528 / LMG 568 / P 25)</name>
    <dbReference type="NCBI Taxonomy" id="190485"/>
    <lineage>
        <taxon>Bacteria</taxon>
        <taxon>Pseudomonadati</taxon>
        <taxon>Pseudomonadota</taxon>
        <taxon>Gammaproteobacteria</taxon>
        <taxon>Lysobacterales</taxon>
        <taxon>Lysobacteraceae</taxon>
        <taxon>Xanthomonas</taxon>
    </lineage>
</organism>